<accession>A6THB1</accession>
<feature type="chain" id="PRO_1000005280" description="Small ribosomal subunit protein bS6">
    <location>
        <begin position="1"/>
        <end position="131"/>
    </location>
</feature>
<feature type="region of interest" description="Disordered" evidence="2">
    <location>
        <begin position="98"/>
        <end position="131"/>
    </location>
</feature>
<feature type="compositionally biased region" description="Basic and acidic residues" evidence="2">
    <location>
        <begin position="104"/>
        <end position="116"/>
    </location>
</feature>
<feature type="compositionally biased region" description="Acidic residues" evidence="2">
    <location>
        <begin position="120"/>
        <end position="131"/>
    </location>
</feature>
<keyword id="KW-0687">Ribonucleoprotein</keyword>
<keyword id="KW-0689">Ribosomal protein</keyword>
<keyword id="KW-0694">RNA-binding</keyword>
<keyword id="KW-0699">rRNA-binding</keyword>
<name>RS6_KLEP7</name>
<comment type="function">
    <text evidence="1">Binds together with bS18 to 16S ribosomal RNA.</text>
</comment>
<comment type="similarity">
    <text evidence="1">Belongs to the bacterial ribosomal protein bS6 family.</text>
</comment>
<dbReference type="EMBL" id="CP000647">
    <property type="protein sequence ID" value="ABR79945.1"/>
    <property type="molecule type" value="Genomic_DNA"/>
</dbReference>
<dbReference type="RefSeq" id="WP_002885691.1">
    <property type="nucleotide sequence ID" value="NC_009648.1"/>
</dbReference>
<dbReference type="SMR" id="A6THB1"/>
<dbReference type="STRING" id="272620.KPN_04594"/>
<dbReference type="jPOST" id="A6THB1"/>
<dbReference type="PaxDb" id="272620-KPN_04594"/>
<dbReference type="EnsemblBacteria" id="ABR79945">
    <property type="protein sequence ID" value="ABR79945"/>
    <property type="gene ID" value="KPN_04594"/>
</dbReference>
<dbReference type="KEGG" id="kpn:KPN_04594"/>
<dbReference type="HOGENOM" id="CLU_113441_6_1_6"/>
<dbReference type="Proteomes" id="UP000000265">
    <property type="component" value="Chromosome"/>
</dbReference>
<dbReference type="GO" id="GO:0022627">
    <property type="term" value="C:cytosolic small ribosomal subunit"/>
    <property type="evidence" value="ECO:0007669"/>
    <property type="project" value="TreeGrafter"/>
</dbReference>
<dbReference type="GO" id="GO:0070181">
    <property type="term" value="F:small ribosomal subunit rRNA binding"/>
    <property type="evidence" value="ECO:0007669"/>
    <property type="project" value="TreeGrafter"/>
</dbReference>
<dbReference type="GO" id="GO:0003735">
    <property type="term" value="F:structural constituent of ribosome"/>
    <property type="evidence" value="ECO:0007669"/>
    <property type="project" value="InterPro"/>
</dbReference>
<dbReference type="GO" id="GO:0006412">
    <property type="term" value="P:translation"/>
    <property type="evidence" value="ECO:0007669"/>
    <property type="project" value="UniProtKB-UniRule"/>
</dbReference>
<dbReference type="CDD" id="cd00473">
    <property type="entry name" value="bS6"/>
    <property type="match status" value="1"/>
</dbReference>
<dbReference type="FunFam" id="3.30.70.60:FF:000003">
    <property type="entry name" value="30S ribosomal protein S6"/>
    <property type="match status" value="1"/>
</dbReference>
<dbReference type="Gene3D" id="3.30.70.60">
    <property type="match status" value="1"/>
</dbReference>
<dbReference type="HAMAP" id="MF_00360">
    <property type="entry name" value="Ribosomal_bS6"/>
    <property type="match status" value="1"/>
</dbReference>
<dbReference type="InterPro" id="IPR000529">
    <property type="entry name" value="Ribosomal_bS6"/>
</dbReference>
<dbReference type="InterPro" id="IPR020815">
    <property type="entry name" value="Ribosomal_bS6_CS"/>
</dbReference>
<dbReference type="InterPro" id="IPR035980">
    <property type="entry name" value="Ribosomal_bS6_sf"/>
</dbReference>
<dbReference type="InterPro" id="IPR020814">
    <property type="entry name" value="Ribosomal_S6_plastid/chlpt"/>
</dbReference>
<dbReference type="InterPro" id="IPR014717">
    <property type="entry name" value="Transl_elong_EF1B/ribsomal_bS6"/>
</dbReference>
<dbReference type="NCBIfam" id="TIGR00166">
    <property type="entry name" value="S6"/>
    <property type="match status" value="1"/>
</dbReference>
<dbReference type="PANTHER" id="PTHR21011">
    <property type="entry name" value="MITOCHONDRIAL 28S RIBOSOMAL PROTEIN S6"/>
    <property type="match status" value="1"/>
</dbReference>
<dbReference type="PANTHER" id="PTHR21011:SF1">
    <property type="entry name" value="SMALL RIBOSOMAL SUBUNIT PROTEIN BS6M"/>
    <property type="match status" value="1"/>
</dbReference>
<dbReference type="Pfam" id="PF01250">
    <property type="entry name" value="Ribosomal_S6"/>
    <property type="match status" value="1"/>
</dbReference>
<dbReference type="SUPFAM" id="SSF54995">
    <property type="entry name" value="Ribosomal protein S6"/>
    <property type="match status" value="1"/>
</dbReference>
<dbReference type="PROSITE" id="PS01048">
    <property type="entry name" value="RIBOSOMAL_S6"/>
    <property type="match status" value="1"/>
</dbReference>
<organism>
    <name type="scientific">Klebsiella pneumoniae subsp. pneumoniae (strain ATCC 700721 / MGH 78578)</name>
    <dbReference type="NCBI Taxonomy" id="272620"/>
    <lineage>
        <taxon>Bacteria</taxon>
        <taxon>Pseudomonadati</taxon>
        <taxon>Pseudomonadota</taxon>
        <taxon>Gammaproteobacteria</taxon>
        <taxon>Enterobacterales</taxon>
        <taxon>Enterobacteriaceae</taxon>
        <taxon>Klebsiella/Raoultella group</taxon>
        <taxon>Klebsiella</taxon>
        <taxon>Klebsiella pneumoniae complex</taxon>
    </lineage>
</organism>
<evidence type="ECO:0000255" key="1">
    <source>
        <dbReference type="HAMAP-Rule" id="MF_00360"/>
    </source>
</evidence>
<evidence type="ECO:0000256" key="2">
    <source>
        <dbReference type="SAM" id="MobiDB-lite"/>
    </source>
</evidence>
<evidence type="ECO:0000305" key="3"/>
<protein>
    <recommendedName>
        <fullName evidence="1">Small ribosomal subunit protein bS6</fullName>
    </recommendedName>
    <alternativeName>
        <fullName evidence="3">30S ribosomal protein S6</fullName>
    </alternativeName>
</protein>
<reference key="1">
    <citation type="submission" date="2006-09" db="EMBL/GenBank/DDBJ databases">
        <authorList>
            <consortium name="The Klebsiella pneumonia Genome Sequencing Project"/>
            <person name="McClelland M."/>
            <person name="Sanderson E.K."/>
            <person name="Spieth J."/>
            <person name="Clifton W.S."/>
            <person name="Latreille P."/>
            <person name="Sabo A."/>
            <person name="Pepin K."/>
            <person name="Bhonagiri V."/>
            <person name="Porwollik S."/>
            <person name="Ali J."/>
            <person name="Wilson R.K."/>
        </authorList>
    </citation>
    <scope>NUCLEOTIDE SEQUENCE [LARGE SCALE GENOMIC DNA]</scope>
    <source>
        <strain>ATCC 700721 / MGH 78578</strain>
    </source>
</reference>
<sequence>MRHYEIVFMVHPDQSEQVPGMIERYTGAITAAAGTIHRLEDWGRRQLAYPINKLHKAHYVLMNVEAPQEAIDELETNFRFNDAVIRSMVMRTKHAVTEASPMVKAKDERRERREDFANETADDSEAGDSEE</sequence>
<gene>
    <name evidence="1" type="primary">rpsF</name>
    <name type="ordered locus">KPN78578_45210</name>
    <name type="ORF">KPN_04594</name>
</gene>
<proteinExistence type="inferred from homology"/>